<reference key="1">
    <citation type="journal article" date="2001" name="Proc. Natl. Acad. Sci. U.S.A.">
        <title>Analysis of the chromosome sequence of the legume symbiont Sinorhizobium meliloti strain 1021.</title>
        <authorList>
            <person name="Capela D."/>
            <person name="Barloy-Hubler F."/>
            <person name="Gouzy J."/>
            <person name="Bothe G."/>
            <person name="Ampe F."/>
            <person name="Batut J."/>
            <person name="Boistard P."/>
            <person name="Becker A."/>
            <person name="Boutry M."/>
            <person name="Cadieu E."/>
            <person name="Dreano S."/>
            <person name="Gloux S."/>
            <person name="Godrie T."/>
            <person name="Goffeau A."/>
            <person name="Kahn D."/>
            <person name="Kiss E."/>
            <person name="Lelaure V."/>
            <person name="Masuy D."/>
            <person name="Pohl T."/>
            <person name="Portetelle D."/>
            <person name="Puehler A."/>
            <person name="Purnelle B."/>
            <person name="Ramsperger U."/>
            <person name="Renard C."/>
            <person name="Thebault P."/>
            <person name="Vandenbol M."/>
            <person name="Weidner S."/>
            <person name="Galibert F."/>
        </authorList>
    </citation>
    <scope>NUCLEOTIDE SEQUENCE [LARGE SCALE GENOMIC DNA]</scope>
    <source>
        <strain>1021</strain>
    </source>
</reference>
<reference key="2">
    <citation type="journal article" date="2001" name="Science">
        <title>The composite genome of the legume symbiont Sinorhizobium meliloti.</title>
        <authorList>
            <person name="Galibert F."/>
            <person name="Finan T.M."/>
            <person name="Long S.R."/>
            <person name="Puehler A."/>
            <person name="Abola P."/>
            <person name="Ampe F."/>
            <person name="Barloy-Hubler F."/>
            <person name="Barnett M.J."/>
            <person name="Becker A."/>
            <person name="Boistard P."/>
            <person name="Bothe G."/>
            <person name="Boutry M."/>
            <person name="Bowser L."/>
            <person name="Buhrmester J."/>
            <person name="Cadieu E."/>
            <person name="Capela D."/>
            <person name="Chain P."/>
            <person name="Cowie A."/>
            <person name="Davis R.W."/>
            <person name="Dreano S."/>
            <person name="Federspiel N.A."/>
            <person name="Fisher R.F."/>
            <person name="Gloux S."/>
            <person name="Godrie T."/>
            <person name="Goffeau A."/>
            <person name="Golding B."/>
            <person name="Gouzy J."/>
            <person name="Gurjal M."/>
            <person name="Hernandez-Lucas I."/>
            <person name="Hong A."/>
            <person name="Huizar L."/>
            <person name="Hyman R.W."/>
            <person name="Jones T."/>
            <person name="Kahn D."/>
            <person name="Kahn M.L."/>
            <person name="Kalman S."/>
            <person name="Keating D.H."/>
            <person name="Kiss E."/>
            <person name="Komp C."/>
            <person name="Lelaure V."/>
            <person name="Masuy D."/>
            <person name="Palm C."/>
            <person name="Peck M.C."/>
            <person name="Pohl T.M."/>
            <person name="Portetelle D."/>
            <person name="Purnelle B."/>
            <person name="Ramsperger U."/>
            <person name="Surzycki R."/>
            <person name="Thebault P."/>
            <person name="Vandenbol M."/>
            <person name="Vorhoelter F.J."/>
            <person name="Weidner S."/>
            <person name="Wells D.H."/>
            <person name="Wong K."/>
            <person name="Yeh K.-C."/>
            <person name="Batut J."/>
        </authorList>
    </citation>
    <scope>NUCLEOTIDE SEQUENCE [LARGE SCALE GENOMIC DNA]</scope>
    <source>
        <strain>1021</strain>
    </source>
</reference>
<reference key="3">
    <citation type="submission" date="2001-12" db="EMBL/GenBank/DDBJ databases">
        <authorList>
            <person name="Watson R.J."/>
            <person name="Heys R."/>
        </authorList>
    </citation>
    <scope>NUCLEOTIDE SEQUENCE [GENOMIC DNA]</scope>
    <source>
        <strain>JJ1c10</strain>
    </source>
</reference>
<organism>
    <name type="scientific">Rhizobium meliloti (strain 1021)</name>
    <name type="common">Ensifer meliloti</name>
    <name type="synonym">Sinorhizobium meliloti</name>
    <dbReference type="NCBI Taxonomy" id="266834"/>
    <lineage>
        <taxon>Bacteria</taxon>
        <taxon>Pseudomonadati</taxon>
        <taxon>Pseudomonadota</taxon>
        <taxon>Alphaproteobacteria</taxon>
        <taxon>Hyphomicrobiales</taxon>
        <taxon>Rhizobiaceae</taxon>
        <taxon>Sinorhizobium/Ensifer group</taxon>
        <taxon>Sinorhizobium</taxon>
    </lineage>
</organism>
<sequence length="339" mass="38629">MDANTEHPAVGYGKLGVLLVNLGTPDGTDVTSMRRYLREFLSDRRVIEWSRLFWYPILYGIVLNTRPRKVGKAYELIWNKDLNESWLRTYTRNQAALMAEAFGGQPQVVVDWAMRYGQPSIASRIEALQKAGCERILVFPLYPQYAAATTATVNDKAFEALLKMRWQPALRTVPPYHDDPVYIDALATSINKHLATLDWEPELVLASFHGIPKSYFEKGDPYYCQCQKTARLLREKLGWPQDRLQVTFQSRFGPEEWLQPYTDATVERLAKEGVKRIAVINPGFVSDCLETLEEIAGQAAESFHHNGGEKFAHIPCLNDSPEGMAVLNHVVRRELEGWL</sequence>
<feature type="chain" id="PRO_0000175189" description="Ferrochelatase">
    <location>
        <begin position="1"/>
        <end position="339"/>
    </location>
</feature>
<feature type="binding site" evidence="1">
    <location>
        <position position="209"/>
    </location>
    <ligand>
        <name>Fe cation</name>
        <dbReference type="ChEBI" id="CHEBI:24875"/>
    </ligand>
</feature>
<feature type="binding site" evidence="1">
    <location>
        <position position="290"/>
    </location>
    <ligand>
        <name>Fe cation</name>
        <dbReference type="ChEBI" id="CHEBI:24875"/>
    </ligand>
</feature>
<accession>Q92M52</accession>
<proteinExistence type="inferred from homology"/>
<dbReference type="EC" id="4.98.1.1" evidence="1"/>
<dbReference type="EMBL" id="AL591688">
    <property type="protein sequence ID" value="CAC47382.1"/>
    <property type="molecule type" value="Genomic_DNA"/>
</dbReference>
<dbReference type="EMBL" id="AF461430">
    <property type="protein sequence ID" value="AAL67571.1"/>
    <property type="molecule type" value="Genomic_DNA"/>
</dbReference>
<dbReference type="RefSeq" id="NP_386909.2">
    <property type="nucleotide sequence ID" value="NC_003047.1"/>
</dbReference>
<dbReference type="RefSeq" id="WP_003531079.1">
    <property type="nucleotide sequence ID" value="NC_003047.1"/>
</dbReference>
<dbReference type="SMR" id="Q92M52"/>
<dbReference type="EnsemblBacteria" id="CAC47382">
    <property type="protein sequence ID" value="CAC47382"/>
    <property type="gene ID" value="SMc04019"/>
</dbReference>
<dbReference type="KEGG" id="sme:SMc04019"/>
<dbReference type="PATRIC" id="fig|266834.11.peg.4317"/>
<dbReference type="eggNOG" id="COG0276">
    <property type="taxonomic scope" value="Bacteria"/>
</dbReference>
<dbReference type="OrthoDB" id="9809741at2"/>
<dbReference type="UniPathway" id="UPA00252">
    <property type="reaction ID" value="UER00325"/>
</dbReference>
<dbReference type="Proteomes" id="UP000001976">
    <property type="component" value="Chromosome"/>
</dbReference>
<dbReference type="GO" id="GO:0005737">
    <property type="term" value="C:cytoplasm"/>
    <property type="evidence" value="ECO:0007669"/>
    <property type="project" value="UniProtKB-SubCell"/>
</dbReference>
<dbReference type="GO" id="GO:0004325">
    <property type="term" value="F:ferrochelatase activity"/>
    <property type="evidence" value="ECO:0007669"/>
    <property type="project" value="UniProtKB-UniRule"/>
</dbReference>
<dbReference type="GO" id="GO:0046872">
    <property type="term" value="F:metal ion binding"/>
    <property type="evidence" value="ECO:0007669"/>
    <property type="project" value="UniProtKB-KW"/>
</dbReference>
<dbReference type="GO" id="GO:0006783">
    <property type="term" value="P:heme biosynthetic process"/>
    <property type="evidence" value="ECO:0007669"/>
    <property type="project" value="UniProtKB-UniRule"/>
</dbReference>
<dbReference type="CDD" id="cd00419">
    <property type="entry name" value="Ferrochelatase_C"/>
    <property type="match status" value="1"/>
</dbReference>
<dbReference type="CDD" id="cd03411">
    <property type="entry name" value="Ferrochelatase_N"/>
    <property type="match status" value="1"/>
</dbReference>
<dbReference type="FunFam" id="3.40.50.1400:FF:000002">
    <property type="entry name" value="Ferrochelatase"/>
    <property type="match status" value="1"/>
</dbReference>
<dbReference type="Gene3D" id="3.40.50.1400">
    <property type="match status" value="2"/>
</dbReference>
<dbReference type="HAMAP" id="MF_00323">
    <property type="entry name" value="Ferrochelatase"/>
    <property type="match status" value="1"/>
</dbReference>
<dbReference type="InterPro" id="IPR001015">
    <property type="entry name" value="Ferrochelatase"/>
</dbReference>
<dbReference type="InterPro" id="IPR019772">
    <property type="entry name" value="Ferrochelatase_AS"/>
</dbReference>
<dbReference type="InterPro" id="IPR033644">
    <property type="entry name" value="Ferrochelatase_C"/>
</dbReference>
<dbReference type="InterPro" id="IPR033659">
    <property type="entry name" value="Ferrochelatase_N"/>
</dbReference>
<dbReference type="NCBIfam" id="TIGR00109">
    <property type="entry name" value="hemH"/>
    <property type="match status" value="1"/>
</dbReference>
<dbReference type="PANTHER" id="PTHR11108">
    <property type="entry name" value="FERROCHELATASE"/>
    <property type="match status" value="1"/>
</dbReference>
<dbReference type="PANTHER" id="PTHR11108:SF1">
    <property type="entry name" value="FERROCHELATASE, MITOCHONDRIAL"/>
    <property type="match status" value="1"/>
</dbReference>
<dbReference type="Pfam" id="PF00762">
    <property type="entry name" value="Ferrochelatase"/>
    <property type="match status" value="1"/>
</dbReference>
<dbReference type="SUPFAM" id="SSF53800">
    <property type="entry name" value="Chelatase"/>
    <property type="match status" value="1"/>
</dbReference>
<dbReference type="PROSITE" id="PS00534">
    <property type="entry name" value="FERROCHELATASE"/>
    <property type="match status" value="1"/>
</dbReference>
<evidence type="ECO:0000255" key="1">
    <source>
        <dbReference type="HAMAP-Rule" id="MF_00323"/>
    </source>
</evidence>
<gene>
    <name evidence="1" type="primary">hemH</name>
    <name type="ordered locus">R02803</name>
    <name type="ORF">SMc04019</name>
</gene>
<name>HEMH_RHIME</name>
<protein>
    <recommendedName>
        <fullName evidence="1">Ferrochelatase</fullName>
        <ecNumber evidence="1">4.98.1.1</ecNumber>
    </recommendedName>
    <alternativeName>
        <fullName evidence="1">Heme synthase</fullName>
    </alternativeName>
    <alternativeName>
        <fullName evidence="1">Protoheme ferro-lyase</fullName>
    </alternativeName>
</protein>
<keyword id="KW-0963">Cytoplasm</keyword>
<keyword id="KW-0350">Heme biosynthesis</keyword>
<keyword id="KW-0408">Iron</keyword>
<keyword id="KW-0456">Lyase</keyword>
<keyword id="KW-0479">Metal-binding</keyword>
<keyword id="KW-0627">Porphyrin biosynthesis</keyword>
<keyword id="KW-1185">Reference proteome</keyword>
<comment type="function">
    <text evidence="1">Catalyzes the ferrous insertion into protoporphyrin IX.</text>
</comment>
<comment type="catalytic activity">
    <reaction evidence="1">
        <text>heme b + 2 H(+) = protoporphyrin IX + Fe(2+)</text>
        <dbReference type="Rhea" id="RHEA:22584"/>
        <dbReference type="ChEBI" id="CHEBI:15378"/>
        <dbReference type="ChEBI" id="CHEBI:29033"/>
        <dbReference type="ChEBI" id="CHEBI:57306"/>
        <dbReference type="ChEBI" id="CHEBI:60344"/>
        <dbReference type="EC" id="4.98.1.1"/>
    </reaction>
</comment>
<comment type="pathway">
    <text evidence="1">Porphyrin-containing compound metabolism; protoheme biosynthesis; protoheme from protoporphyrin-IX: step 1/1.</text>
</comment>
<comment type="subcellular location">
    <subcellularLocation>
        <location evidence="1">Cytoplasm</location>
    </subcellularLocation>
</comment>
<comment type="similarity">
    <text evidence="1">Belongs to the ferrochelatase family.</text>
</comment>